<accession>A0QGN7</accession>
<organism>
    <name type="scientific">Mycobacterium avium (strain 104)</name>
    <dbReference type="NCBI Taxonomy" id="243243"/>
    <lineage>
        <taxon>Bacteria</taxon>
        <taxon>Bacillati</taxon>
        <taxon>Actinomycetota</taxon>
        <taxon>Actinomycetes</taxon>
        <taxon>Mycobacteriales</taxon>
        <taxon>Mycobacteriaceae</taxon>
        <taxon>Mycobacterium</taxon>
        <taxon>Mycobacterium avium complex (MAC)</taxon>
    </lineage>
</organism>
<proteinExistence type="inferred from homology"/>
<keyword id="KW-0450">Lipoyl</keyword>
<protein>
    <recommendedName>
        <fullName evidence="1">Glycine cleavage system H protein</fullName>
    </recommendedName>
</protein>
<dbReference type="EMBL" id="CP000479">
    <property type="protein sequence ID" value="ABK67069.1"/>
    <property type="molecule type" value="Genomic_DNA"/>
</dbReference>
<dbReference type="RefSeq" id="WP_003876506.1">
    <property type="nucleotide sequence ID" value="NC_008595.1"/>
</dbReference>
<dbReference type="SMR" id="A0QGN7"/>
<dbReference type="GeneID" id="75270264"/>
<dbReference type="KEGG" id="mav:MAV_2889"/>
<dbReference type="HOGENOM" id="CLU_097408_2_0_11"/>
<dbReference type="Proteomes" id="UP000001574">
    <property type="component" value="Chromosome"/>
</dbReference>
<dbReference type="GO" id="GO:0005829">
    <property type="term" value="C:cytosol"/>
    <property type="evidence" value="ECO:0007669"/>
    <property type="project" value="TreeGrafter"/>
</dbReference>
<dbReference type="GO" id="GO:0005960">
    <property type="term" value="C:glycine cleavage complex"/>
    <property type="evidence" value="ECO:0007669"/>
    <property type="project" value="InterPro"/>
</dbReference>
<dbReference type="GO" id="GO:0019464">
    <property type="term" value="P:glycine decarboxylation via glycine cleavage system"/>
    <property type="evidence" value="ECO:0007669"/>
    <property type="project" value="UniProtKB-UniRule"/>
</dbReference>
<dbReference type="CDD" id="cd06848">
    <property type="entry name" value="GCS_H"/>
    <property type="match status" value="1"/>
</dbReference>
<dbReference type="Gene3D" id="2.40.50.100">
    <property type="match status" value="1"/>
</dbReference>
<dbReference type="HAMAP" id="MF_00272">
    <property type="entry name" value="GcvH"/>
    <property type="match status" value="1"/>
</dbReference>
<dbReference type="InterPro" id="IPR003016">
    <property type="entry name" value="2-oxoA_DH_lipoyl-BS"/>
</dbReference>
<dbReference type="InterPro" id="IPR000089">
    <property type="entry name" value="Biotin_lipoyl"/>
</dbReference>
<dbReference type="InterPro" id="IPR002930">
    <property type="entry name" value="GCV_H"/>
</dbReference>
<dbReference type="InterPro" id="IPR033753">
    <property type="entry name" value="GCV_H/Fam206"/>
</dbReference>
<dbReference type="InterPro" id="IPR017453">
    <property type="entry name" value="GCV_H_sub"/>
</dbReference>
<dbReference type="InterPro" id="IPR011053">
    <property type="entry name" value="Single_hybrid_motif"/>
</dbReference>
<dbReference type="NCBIfam" id="TIGR00527">
    <property type="entry name" value="gcvH"/>
    <property type="match status" value="1"/>
</dbReference>
<dbReference type="NCBIfam" id="NF002270">
    <property type="entry name" value="PRK01202.1"/>
    <property type="match status" value="1"/>
</dbReference>
<dbReference type="PANTHER" id="PTHR11715">
    <property type="entry name" value="GLYCINE CLEAVAGE SYSTEM H PROTEIN"/>
    <property type="match status" value="1"/>
</dbReference>
<dbReference type="PANTHER" id="PTHR11715:SF3">
    <property type="entry name" value="GLYCINE CLEAVAGE SYSTEM H PROTEIN-RELATED"/>
    <property type="match status" value="1"/>
</dbReference>
<dbReference type="Pfam" id="PF01597">
    <property type="entry name" value="GCV_H"/>
    <property type="match status" value="1"/>
</dbReference>
<dbReference type="SUPFAM" id="SSF51230">
    <property type="entry name" value="Single hybrid motif"/>
    <property type="match status" value="1"/>
</dbReference>
<dbReference type="PROSITE" id="PS50968">
    <property type="entry name" value="BIOTINYL_LIPOYL"/>
    <property type="match status" value="1"/>
</dbReference>
<dbReference type="PROSITE" id="PS00189">
    <property type="entry name" value="LIPOYL"/>
    <property type="match status" value="1"/>
</dbReference>
<comment type="function">
    <text evidence="1">The glycine cleavage system catalyzes the degradation of glycine. The H protein shuttles the methylamine group of glycine from the P protein to the T protein.</text>
</comment>
<comment type="cofactor">
    <cofactor evidence="1">
        <name>(R)-lipoate</name>
        <dbReference type="ChEBI" id="CHEBI:83088"/>
    </cofactor>
    <text evidence="1">Binds 1 lipoyl cofactor covalently.</text>
</comment>
<comment type="subunit">
    <text evidence="1">The glycine cleavage system is composed of four proteins: P, T, L and H.</text>
</comment>
<comment type="similarity">
    <text evidence="1">Belongs to the GcvH family.</text>
</comment>
<gene>
    <name evidence="1" type="primary">gcvH</name>
    <name type="ordered locus">MAV_2889</name>
</gene>
<evidence type="ECO:0000255" key="1">
    <source>
        <dbReference type="HAMAP-Rule" id="MF_00272"/>
    </source>
</evidence>
<evidence type="ECO:0000255" key="2">
    <source>
        <dbReference type="PROSITE-ProRule" id="PRU01066"/>
    </source>
</evidence>
<name>GCSH_MYCA1</name>
<reference key="1">
    <citation type="submission" date="2006-10" db="EMBL/GenBank/DDBJ databases">
        <authorList>
            <person name="Fleischmann R.D."/>
            <person name="Dodson R.J."/>
            <person name="Haft D.H."/>
            <person name="Merkel J.S."/>
            <person name="Nelson W.C."/>
            <person name="Fraser C.M."/>
        </authorList>
    </citation>
    <scope>NUCLEOTIDE SEQUENCE [LARGE SCALE GENOMIC DNA]</scope>
    <source>
        <strain>104</strain>
    </source>
</reference>
<feature type="chain" id="PRO_0000302390" description="Glycine cleavage system H protein">
    <location>
        <begin position="1"/>
        <end position="132"/>
    </location>
</feature>
<feature type="domain" description="Lipoyl-binding" evidence="2">
    <location>
        <begin position="24"/>
        <end position="106"/>
    </location>
</feature>
<feature type="modified residue" description="N6-lipoyllysine" evidence="1">
    <location>
        <position position="65"/>
    </location>
</feature>
<sequence length="132" mass="13915">MSDIPPDLHYTAEHEWVRRSGDDTVRVGITDFAQSALGDVVFVQLPEVGAQLTAGESFGEVESTKSVSDLYAPVSGTVTAVNTDLEGSPQLVNSDPYGAGWLLDVQVSDAAALESAITALLDAEAYRGTLTE</sequence>